<feature type="chain" id="PRO_1000014171" description="Small ribosomal subunit protein uS7">
    <location>
        <begin position="1"/>
        <end position="156"/>
    </location>
</feature>
<gene>
    <name evidence="1" type="primary">rpsG</name>
    <name type="ordered locus">CRP_159</name>
</gene>
<name>RS7_CARRP</name>
<proteinExistence type="inferred from homology"/>
<organism>
    <name type="scientific">Carsonella ruddii (strain PV)</name>
    <dbReference type="NCBI Taxonomy" id="387662"/>
    <lineage>
        <taxon>Bacteria</taxon>
        <taxon>Pseudomonadati</taxon>
        <taxon>Pseudomonadota</taxon>
        <taxon>Gammaproteobacteria</taxon>
        <taxon>Oceanospirillales</taxon>
        <taxon>Halomonadaceae</taxon>
        <taxon>Zymobacter group</taxon>
        <taxon>Candidatus Carsonella</taxon>
    </lineage>
</organism>
<accession>Q05FI1</accession>
<protein>
    <recommendedName>
        <fullName evidence="1">Small ribosomal subunit protein uS7</fullName>
    </recommendedName>
    <alternativeName>
        <fullName evidence="2">30S ribosomal protein S7</fullName>
    </alternativeName>
</protein>
<reference key="1">
    <citation type="journal article" date="2006" name="Science">
        <title>The 160-kilobase genome of the bacterial endosymbiont Carsonella.</title>
        <authorList>
            <person name="Nakabachi A."/>
            <person name="Yamashita A."/>
            <person name="Toh H."/>
            <person name="Ishikawa H."/>
            <person name="Dunbar H.E."/>
            <person name="Moran N.A."/>
            <person name="Hattori M."/>
        </authorList>
    </citation>
    <scope>NUCLEOTIDE SEQUENCE [LARGE SCALE GENOMIC DNA]</scope>
    <source>
        <strain>PV</strain>
    </source>
</reference>
<keyword id="KW-0687">Ribonucleoprotein</keyword>
<keyword id="KW-0689">Ribosomal protein</keyword>
<keyword id="KW-0694">RNA-binding</keyword>
<keyword id="KW-0699">rRNA-binding</keyword>
<keyword id="KW-0820">tRNA-binding</keyword>
<dbReference type="EMBL" id="AP009180">
    <property type="protein sequence ID" value="BAF35190.1"/>
    <property type="molecule type" value="Genomic_DNA"/>
</dbReference>
<dbReference type="RefSeq" id="WP_011672382.1">
    <property type="nucleotide sequence ID" value="NC_008512.1"/>
</dbReference>
<dbReference type="SMR" id="Q05FI1"/>
<dbReference type="STRING" id="387662.CRP_159"/>
<dbReference type="KEGG" id="crp:CRP_159"/>
<dbReference type="HOGENOM" id="CLU_072226_1_1_6"/>
<dbReference type="OrthoDB" id="9807653at2"/>
<dbReference type="Proteomes" id="UP000000777">
    <property type="component" value="Chromosome"/>
</dbReference>
<dbReference type="GO" id="GO:0015935">
    <property type="term" value="C:small ribosomal subunit"/>
    <property type="evidence" value="ECO:0007669"/>
    <property type="project" value="InterPro"/>
</dbReference>
<dbReference type="GO" id="GO:0019843">
    <property type="term" value="F:rRNA binding"/>
    <property type="evidence" value="ECO:0007669"/>
    <property type="project" value="UniProtKB-UniRule"/>
</dbReference>
<dbReference type="GO" id="GO:0003735">
    <property type="term" value="F:structural constituent of ribosome"/>
    <property type="evidence" value="ECO:0007669"/>
    <property type="project" value="InterPro"/>
</dbReference>
<dbReference type="GO" id="GO:0000049">
    <property type="term" value="F:tRNA binding"/>
    <property type="evidence" value="ECO:0007669"/>
    <property type="project" value="UniProtKB-UniRule"/>
</dbReference>
<dbReference type="GO" id="GO:0006412">
    <property type="term" value="P:translation"/>
    <property type="evidence" value="ECO:0007669"/>
    <property type="project" value="UniProtKB-UniRule"/>
</dbReference>
<dbReference type="CDD" id="cd14869">
    <property type="entry name" value="uS7_Bacteria"/>
    <property type="match status" value="1"/>
</dbReference>
<dbReference type="Gene3D" id="1.10.455.10">
    <property type="entry name" value="Ribosomal protein S7 domain"/>
    <property type="match status" value="1"/>
</dbReference>
<dbReference type="HAMAP" id="MF_00480_B">
    <property type="entry name" value="Ribosomal_uS7_B"/>
    <property type="match status" value="1"/>
</dbReference>
<dbReference type="InterPro" id="IPR000235">
    <property type="entry name" value="Ribosomal_uS7"/>
</dbReference>
<dbReference type="InterPro" id="IPR005717">
    <property type="entry name" value="Ribosomal_uS7_bac/org-type"/>
</dbReference>
<dbReference type="InterPro" id="IPR020606">
    <property type="entry name" value="Ribosomal_uS7_CS"/>
</dbReference>
<dbReference type="InterPro" id="IPR023798">
    <property type="entry name" value="Ribosomal_uS7_dom"/>
</dbReference>
<dbReference type="InterPro" id="IPR036823">
    <property type="entry name" value="Ribosomal_uS7_dom_sf"/>
</dbReference>
<dbReference type="PANTHER" id="PTHR11205">
    <property type="entry name" value="RIBOSOMAL PROTEIN S7"/>
    <property type="match status" value="1"/>
</dbReference>
<dbReference type="Pfam" id="PF00177">
    <property type="entry name" value="Ribosomal_S7"/>
    <property type="match status" value="1"/>
</dbReference>
<dbReference type="PIRSF" id="PIRSF002122">
    <property type="entry name" value="RPS7p_RPS7a_RPS5e_RPS7o"/>
    <property type="match status" value="1"/>
</dbReference>
<dbReference type="SUPFAM" id="SSF47973">
    <property type="entry name" value="Ribosomal protein S7"/>
    <property type="match status" value="1"/>
</dbReference>
<dbReference type="PROSITE" id="PS00052">
    <property type="entry name" value="RIBOSOMAL_S7"/>
    <property type="match status" value="1"/>
</dbReference>
<evidence type="ECO:0000255" key="1">
    <source>
        <dbReference type="HAMAP-Rule" id="MF_00480"/>
    </source>
</evidence>
<evidence type="ECO:0000305" key="2"/>
<sequence length="156" mass="18511">MSRKKRYFKTVILNDPKFGSYIIAKFINYIMNNGKKNLAQKIFYYSISIISIRLNKNPFILIKKILYNVQPNFEIKKKKIGGSFYKIPIKINLKRSLMFSMKWIVKNSKLRNENGYKNKLVGELIDSYYNNSLSTKQKDELNKIIDQNKAYSNFKI</sequence>
<comment type="function">
    <text evidence="1">One of the primary rRNA binding proteins, it binds directly to 16S rRNA where it nucleates assembly of the head domain of the 30S subunit. Is located at the subunit interface close to the decoding center, probably blocks exit of the E-site tRNA.</text>
</comment>
<comment type="subunit">
    <text evidence="1">Part of the 30S ribosomal subunit. Contacts proteins S9 and S11.</text>
</comment>
<comment type="similarity">
    <text evidence="1">Belongs to the universal ribosomal protein uS7 family.</text>
</comment>